<dbReference type="EC" id="4.3.2.10" evidence="1"/>
<dbReference type="EMBL" id="AM942444">
    <property type="protein sequence ID" value="CAQ05129.1"/>
    <property type="molecule type" value="Genomic_DNA"/>
</dbReference>
<dbReference type="RefSeq" id="WP_012360417.1">
    <property type="nucleotide sequence ID" value="NC_010545.1"/>
</dbReference>
<dbReference type="SMR" id="B1VH88"/>
<dbReference type="STRING" id="504474.cu1169"/>
<dbReference type="GeneID" id="60603951"/>
<dbReference type="KEGG" id="cur:cu1169"/>
<dbReference type="eggNOG" id="COG0107">
    <property type="taxonomic scope" value="Bacteria"/>
</dbReference>
<dbReference type="HOGENOM" id="CLU_048577_4_0_11"/>
<dbReference type="UniPathway" id="UPA00031">
    <property type="reaction ID" value="UER00010"/>
</dbReference>
<dbReference type="Proteomes" id="UP000001727">
    <property type="component" value="Chromosome"/>
</dbReference>
<dbReference type="GO" id="GO:0005737">
    <property type="term" value="C:cytoplasm"/>
    <property type="evidence" value="ECO:0007669"/>
    <property type="project" value="UniProtKB-SubCell"/>
</dbReference>
<dbReference type="GO" id="GO:0000107">
    <property type="term" value="F:imidazoleglycerol-phosphate synthase activity"/>
    <property type="evidence" value="ECO:0007669"/>
    <property type="project" value="UniProtKB-UniRule"/>
</dbReference>
<dbReference type="GO" id="GO:0016829">
    <property type="term" value="F:lyase activity"/>
    <property type="evidence" value="ECO:0007669"/>
    <property type="project" value="UniProtKB-KW"/>
</dbReference>
<dbReference type="GO" id="GO:0000105">
    <property type="term" value="P:L-histidine biosynthetic process"/>
    <property type="evidence" value="ECO:0007669"/>
    <property type="project" value="UniProtKB-UniRule"/>
</dbReference>
<dbReference type="CDD" id="cd04731">
    <property type="entry name" value="HisF"/>
    <property type="match status" value="1"/>
</dbReference>
<dbReference type="FunFam" id="3.20.20.70:FF:000006">
    <property type="entry name" value="Imidazole glycerol phosphate synthase subunit HisF"/>
    <property type="match status" value="1"/>
</dbReference>
<dbReference type="Gene3D" id="3.20.20.70">
    <property type="entry name" value="Aldolase class I"/>
    <property type="match status" value="1"/>
</dbReference>
<dbReference type="HAMAP" id="MF_01013">
    <property type="entry name" value="HisF"/>
    <property type="match status" value="1"/>
</dbReference>
<dbReference type="InterPro" id="IPR013785">
    <property type="entry name" value="Aldolase_TIM"/>
</dbReference>
<dbReference type="InterPro" id="IPR006062">
    <property type="entry name" value="His_biosynth"/>
</dbReference>
<dbReference type="InterPro" id="IPR004651">
    <property type="entry name" value="HisF"/>
</dbReference>
<dbReference type="InterPro" id="IPR050064">
    <property type="entry name" value="IGPS_HisA/HisF"/>
</dbReference>
<dbReference type="InterPro" id="IPR011060">
    <property type="entry name" value="RibuloseP-bd_barrel"/>
</dbReference>
<dbReference type="NCBIfam" id="TIGR00735">
    <property type="entry name" value="hisF"/>
    <property type="match status" value="1"/>
</dbReference>
<dbReference type="PANTHER" id="PTHR21235:SF2">
    <property type="entry name" value="IMIDAZOLE GLYCEROL PHOSPHATE SYNTHASE HISHF"/>
    <property type="match status" value="1"/>
</dbReference>
<dbReference type="PANTHER" id="PTHR21235">
    <property type="entry name" value="IMIDAZOLE GLYCEROL PHOSPHATE SYNTHASE SUBUNIT HISF/H IGP SYNTHASE SUBUNIT HISF/H"/>
    <property type="match status" value="1"/>
</dbReference>
<dbReference type="Pfam" id="PF00977">
    <property type="entry name" value="His_biosynth"/>
    <property type="match status" value="1"/>
</dbReference>
<dbReference type="SUPFAM" id="SSF51366">
    <property type="entry name" value="Ribulose-phoshate binding barrel"/>
    <property type="match status" value="1"/>
</dbReference>
<reference key="1">
    <citation type="journal article" date="2008" name="J. Biotechnol.">
        <title>The lifestyle of Corynebacterium urealyticum derived from its complete genome sequence established by pyrosequencing.</title>
        <authorList>
            <person name="Tauch A."/>
            <person name="Trost E."/>
            <person name="Tilker A."/>
            <person name="Ludewig U."/>
            <person name="Schneiker S."/>
            <person name="Goesmann A."/>
            <person name="Arnold W."/>
            <person name="Bekel T."/>
            <person name="Brinkrolf K."/>
            <person name="Brune I."/>
            <person name="Goetker S."/>
            <person name="Kalinowski J."/>
            <person name="Kamp P.-B."/>
            <person name="Lobo F.P."/>
            <person name="Viehoever P."/>
            <person name="Weisshaar B."/>
            <person name="Soriano F."/>
            <person name="Droege M."/>
            <person name="Puehler A."/>
        </authorList>
    </citation>
    <scope>NUCLEOTIDE SEQUENCE [LARGE SCALE GENOMIC DNA]</scope>
    <source>
        <strain>ATCC 43042 / DSM 7109</strain>
    </source>
</reference>
<sequence>MSVSVRVIPCLDVANGRVVKGVNFKNLRDAGDPVELAKRYDEEGADELTFLDVSASKEGRGTMLDVVRRTADQIFIPLTVGGGVRSVEDADALLRAGADKVSVNSSAVANPELLRELSTCFGAQCVVLSVDARRCDDQPSGYEVTTHGGTKSAGLDAVAWAKKGEELGVGEILLNSMDADGTKDGFDTEMLAAVREVVSIPVIASGGAGKASHFPPAVAAGANAVLAASIFHFGEVSIREVKDALGQDYEVRR</sequence>
<feature type="chain" id="PRO_1000134984" description="Imidazole glycerol phosphate synthase subunit HisF">
    <location>
        <begin position="1"/>
        <end position="253"/>
    </location>
</feature>
<feature type="active site" evidence="1">
    <location>
        <position position="12"/>
    </location>
</feature>
<feature type="active site" evidence="1">
    <location>
        <position position="131"/>
    </location>
</feature>
<name>HIS6_CORU7</name>
<evidence type="ECO:0000255" key="1">
    <source>
        <dbReference type="HAMAP-Rule" id="MF_01013"/>
    </source>
</evidence>
<proteinExistence type="inferred from homology"/>
<comment type="function">
    <text evidence="1">IGPS catalyzes the conversion of PRFAR and glutamine to IGP, AICAR and glutamate. The HisF subunit catalyzes the cyclization activity that produces IGP and AICAR from PRFAR using the ammonia provided by the HisH subunit.</text>
</comment>
<comment type="catalytic activity">
    <reaction evidence="1">
        <text>5-[(5-phospho-1-deoxy-D-ribulos-1-ylimino)methylamino]-1-(5-phospho-beta-D-ribosyl)imidazole-4-carboxamide + L-glutamine = D-erythro-1-(imidazol-4-yl)glycerol 3-phosphate + 5-amino-1-(5-phospho-beta-D-ribosyl)imidazole-4-carboxamide + L-glutamate + H(+)</text>
        <dbReference type="Rhea" id="RHEA:24793"/>
        <dbReference type="ChEBI" id="CHEBI:15378"/>
        <dbReference type="ChEBI" id="CHEBI:29985"/>
        <dbReference type="ChEBI" id="CHEBI:58278"/>
        <dbReference type="ChEBI" id="CHEBI:58359"/>
        <dbReference type="ChEBI" id="CHEBI:58475"/>
        <dbReference type="ChEBI" id="CHEBI:58525"/>
        <dbReference type="EC" id="4.3.2.10"/>
    </reaction>
</comment>
<comment type="pathway">
    <text evidence="1">Amino-acid biosynthesis; L-histidine biosynthesis; L-histidine from 5-phospho-alpha-D-ribose 1-diphosphate: step 5/9.</text>
</comment>
<comment type="subunit">
    <text evidence="1">Heterodimer of HisH and HisF.</text>
</comment>
<comment type="subcellular location">
    <subcellularLocation>
        <location evidence="1">Cytoplasm</location>
    </subcellularLocation>
</comment>
<comment type="similarity">
    <text evidence="1">Belongs to the HisA/HisF family.</text>
</comment>
<gene>
    <name evidence="1" type="primary">hisF</name>
    <name type="ordered locus">cu1169</name>
</gene>
<organism>
    <name type="scientific">Corynebacterium urealyticum (strain ATCC 43042 / DSM 7109)</name>
    <dbReference type="NCBI Taxonomy" id="504474"/>
    <lineage>
        <taxon>Bacteria</taxon>
        <taxon>Bacillati</taxon>
        <taxon>Actinomycetota</taxon>
        <taxon>Actinomycetes</taxon>
        <taxon>Mycobacteriales</taxon>
        <taxon>Corynebacteriaceae</taxon>
        <taxon>Corynebacterium</taxon>
    </lineage>
</organism>
<keyword id="KW-0028">Amino-acid biosynthesis</keyword>
<keyword id="KW-0963">Cytoplasm</keyword>
<keyword id="KW-0368">Histidine biosynthesis</keyword>
<keyword id="KW-0456">Lyase</keyword>
<keyword id="KW-1185">Reference proteome</keyword>
<accession>B1VH88</accession>
<protein>
    <recommendedName>
        <fullName evidence="1">Imidazole glycerol phosphate synthase subunit HisF</fullName>
        <ecNumber evidence="1">4.3.2.10</ecNumber>
    </recommendedName>
    <alternativeName>
        <fullName evidence="1">IGP synthase cyclase subunit</fullName>
    </alternativeName>
    <alternativeName>
        <fullName evidence="1">IGP synthase subunit HisF</fullName>
    </alternativeName>
    <alternativeName>
        <fullName evidence="1">ImGP synthase subunit HisF</fullName>
        <shortName evidence="1">IGPS subunit HisF</shortName>
    </alternativeName>
</protein>